<gene>
    <name evidence="1" type="primary">ubiC</name>
    <name type="ordered locus">Daro_3252</name>
</gene>
<sequence>MKRSKWRTRFAGAYCDPILRSWLTEPDSLTARCQRASSAFRVRLLRYGKGQALADEAVEGKAGRHSAWVREVVLECDGVPVIFAHTTLSTARRGRMTRWMAGLGSRSLGSLLFAYPGFKRGGIEFLRLDRCHPLYRRAAALGAGRKSLWARRSLHRLGGQQVLVTEVFLPAITLLK</sequence>
<dbReference type="EC" id="4.1.3.40" evidence="1"/>
<dbReference type="EMBL" id="CP000089">
    <property type="protein sequence ID" value="AAZ47982.1"/>
    <property type="molecule type" value="Genomic_DNA"/>
</dbReference>
<dbReference type="SMR" id="Q47AZ9"/>
<dbReference type="STRING" id="159087.Daro_3252"/>
<dbReference type="KEGG" id="dar:Daro_3252"/>
<dbReference type="eggNOG" id="COG3161">
    <property type="taxonomic scope" value="Bacteria"/>
</dbReference>
<dbReference type="HOGENOM" id="CLU_096824_2_0_4"/>
<dbReference type="OrthoDB" id="8606430at2"/>
<dbReference type="UniPathway" id="UPA00232"/>
<dbReference type="GO" id="GO:0005829">
    <property type="term" value="C:cytosol"/>
    <property type="evidence" value="ECO:0007669"/>
    <property type="project" value="TreeGrafter"/>
</dbReference>
<dbReference type="GO" id="GO:0008813">
    <property type="term" value="F:chorismate lyase activity"/>
    <property type="evidence" value="ECO:0007669"/>
    <property type="project" value="UniProtKB-UniRule"/>
</dbReference>
<dbReference type="GO" id="GO:0042866">
    <property type="term" value="P:pyruvate biosynthetic process"/>
    <property type="evidence" value="ECO:0007669"/>
    <property type="project" value="UniProtKB-UniRule"/>
</dbReference>
<dbReference type="GO" id="GO:0006744">
    <property type="term" value="P:ubiquinone biosynthetic process"/>
    <property type="evidence" value="ECO:0007669"/>
    <property type="project" value="UniProtKB-UniRule"/>
</dbReference>
<dbReference type="Gene3D" id="3.40.1410.10">
    <property type="entry name" value="Chorismate lyase-like"/>
    <property type="match status" value="1"/>
</dbReference>
<dbReference type="HAMAP" id="MF_01632">
    <property type="entry name" value="UbiC"/>
    <property type="match status" value="1"/>
</dbReference>
<dbReference type="InterPro" id="IPR007440">
    <property type="entry name" value="Chorismate--pyruvate_lyase"/>
</dbReference>
<dbReference type="InterPro" id="IPR028978">
    <property type="entry name" value="Chorismate_lyase_/UTRA_dom_sf"/>
</dbReference>
<dbReference type="PANTHER" id="PTHR38683">
    <property type="entry name" value="CHORISMATE PYRUVATE-LYASE"/>
    <property type="match status" value="1"/>
</dbReference>
<dbReference type="PANTHER" id="PTHR38683:SF1">
    <property type="entry name" value="CHORISMATE PYRUVATE-LYASE"/>
    <property type="match status" value="1"/>
</dbReference>
<dbReference type="Pfam" id="PF04345">
    <property type="entry name" value="Chor_lyase"/>
    <property type="match status" value="1"/>
</dbReference>
<dbReference type="SUPFAM" id="SSF64288">
    <property type="entry name" value="Chorismate lyase-like"/>
    <property type="match status" value="1"/>
</dbReference>
<organism>
    <name type="scientific">Dechloromonas aromatica (strain RCB)</name>
    <dbReference type="NCBI Taxonomy" id="159087"/>
    <lineage>
        <taxon>Bacteria</taxon>
        <taxon>Pseudomonadati</taxon>
        <taxon>Pseudomonadota</taxon>
        <taxon>Betaproteobacteria</taxon>
        <taxon>Rhodocyclales</taxon>
        <taxon>Azonexaceae</taxon>
        <taxon>Dechloromonas</taxon>
    </lineage>
</organism>
<comment type="function">
    <text evidence="1">Removes the pyruvyl group from chorismate, with concomitant aromatization of the ring, to provide 4-hydroxybenzoate (4HB) for the ubiquinone pathway.</text>
</comment>
<comment type="catalytic activity">
    <reaction evidence="1">
        <text>chorismate = 4-hydroxybenzoate + pyruvate</text>
        <dbReference type="Rhea" id="RHEA:16505"/>
        <dbReference type="ChEBI" id="CHEBI:15361"/>
        <dbReference type="ChEBI" id="CHEBI:17879"/>
        <dbReference type="ChEBI" id="CHEBI:29748"/>
        <dbReference type="EC" id="4.1.3.40"/>
    </reaction>
</comment>
<comment type="pathway">
    <text evidence="1">Cofactor biosynthesis; ubiquinone biosynthesis.</text>
</comment>
<comment type="subcellular location">
    <subcellularLocation>
        <location evidence="1">Cytoplasm</location>
    </subcellularLocation>
</comment>
<comment type="similarity">
    <text evidence="1">Belongs to the UbiC family.</text>
</comment>
<keyword id="KW-0963">Cytoplasm</keyword>
<keyword id="KW-0456">Lyase</keyword>
<keyword id="KW-0670">Pyruvate</keyword>
<keyword id="KW-0831">Ubiquinone biosynthesis</keyword>
<name>UBIC_DECAR</name>
<feature type="chain" id="PRO_0000255906" description="Probable chorismate pyruvate-lyase">
    <location>
        <begin position="1"/>
        <end position="176"/>
    </location>
</feature>
<feature type="binding site" evidence="1">
    <location>
        <position position="70"/>
    </location>
    <ligand>
        <name>substrate</name>
    </ligand>
</feature>
<feature type="binding site" evidence="1">
    <location>
        <position position="108"/>
    </location>
    <ligand>
        <name>substrate</name>
    </ligand>
</feature>
<feature type="binding site" evidence="1">
    <location>
        <position position="166"/>
    </location>
    <ligand>
        <name>substrate</name>
    </ligand>
</feature>
<accession>Q47AZ9</accession>
<evidence type="ECO:0000255" key="1">
    <source>
        <dbReference type="HAMAP-Rule" id="MF_01632"/>
    </source>
</evidence>
<reference key="1">
    <citation type="journal article" date="2009" name="BMC Genomics">
        <title>Metabolic analysis of the soil microbe Dechloromonas aromatica str. RCB: indications of a surprisingly complex life-style and cryptic anaerobic pathways for aromatic degradation.</title>
        <authorList>
            <person name="Salinero K.K."/>
            <person name="Keller K."/>
            <person name="Feil W.S."/>
            <person name="Feil H."/>
            <person name="Trong S."/>
            <person name="Di Bartolo G."/>
            <person name="Lapidus A."/>
        </authorList>
    </citation>
    <scope>NUCLEOTIDE SEQUENCE [LARGE SCALE GENOMIC DNA]</scope>
    <source>
        <strain>RCB</strain>
    </source>
</reference>
<proteinExistence type="inferred from homology"/>
<protein>
    <recommendedName>
        <fullName evidence="1">Probable chorismate pyruvate-lyase</fullName>
        <shortName evidence="1">CL</shortName>
        <shortName evidence="1">CPL</shortName>
        <ecNumber evidence="1">4.1.3.40</ecNumber>
    </recommendedName>
</protein>